<organism>
    <name type="scientific">Trematomus bernacchii</name>
    <name type="common">Emerald rockcod</name>
    <name type="synonym">Pseudotrematomus bernacchii</name>
    <dbReference type="NCBI Taxonomy" id="40690"/>
    <lineage>
        <taxon>Eukaryota</taxon>
        <taxon>Metazoa</taxon>
        <taxon>Chordata</taxon>
        <taxon>Craniata</taxon>
        <taxon>Vertebrata</taxon>
        <taxon>Euteleostomi</taxon>
        <taxon>Actinopterygii</taxon>
        <taxon>Neopterygii</taxon>
        <taxon>Teleostei</taxon>
        <taxon>Neoteleostei</taxon>
        <taxon>Acanthomorphata</taxon>
        <taxon>Eupercaria</taxon>
        <taxon>Perciformes</taxon>
        <taxon>Notothenioidei</taxon>
        <taxon>Nototheniidae</taxon>
        <taxon>Trematomus</taxon>
    </lineage>
</organism>
<proteinExistence type="evidence at transcript level"/>
<protein>
    <recommendedName>
        <fullName>L-lactate dehydrogenase A chain</fullName>
        <shortName>LDH-A</shortName>
        <ecNumber evidence="2">1.1.1.27</ecNumber>
    </recommendedName>
</protein>
<comment type="function">
    <text evidence="2">Interconverts simultaneously and stereospecifically pyruvate and lactate with concomitant interconversion of NADH and NAD(+).</text>
</comment>
<comment type="catalytic activity">
    <reaction evidence="2">
        <text>(S)-lactate + NAD(+) = pyruvate + NADH + H(+)</text>
        <dbReference type="Rhea" id="RHEA:23444"/>
        <dbReference type="ChEBI" id="CHEBI:15361"/>
        <dbReference type="ChEBI" id="CHEBI:15378"/>
        <dbReference type="ChEBI" id="CHEBI:16651"/>
        <dbReference type="ChEBI" id="CHEBI:57540"/>
        <dbReference type="ChEBI" id="CHEBI:57945"/>
        <dbReference type="EC" id="1.1.1.27"/>
    </reaction>
    <physiologicalReaction direction="left-to-right" evidence="2">
        <dbReference type="Rhea" id="RHEA:23445"/>
    </physiologicalReaction>
    <physiologicalReaction direction="right-to-left" evidence="2">
        <dbReference type="Rhea" id="RHEA:23446"/>
    </physiologicalReaction>
</comment>
<comment type="pathway">
    <text evidence="2">Fermentation; pyruvate fermentation to lactate; (S)-lactate from pyruvate: step 1/1.</text>
</comment>
<comment type="subunit">
    <text evidence="1">Homotetramer.</text>
</comment>
<comment type="subcellular location">
    <subcellularLocation>
        <location evidence="1">Cytoplasm</location>
    </subcellularLocation>
</comment>
<comment type="similarity">
    <text evidence="3">Belongs to the LDH/MDH superfamily. LDH family.</text>
</comment>
<dbReference type="EC" id="1.1.1.27" evidence="2"/>
<dbReference type="EMBL" id="AF170847">
    <property type="protein sequence ID" value="AAD48487.1"/>
    <property type="molecule type" value="mRNA"/>
</dbReference>
<dbReference type="RefSeq" id="XP_033997584.1">
    <property type="nucleotide sequence ID" value="XM_034141693.1"/>
</dbReference>
<dbReference type="SMR" id="P69082"/>
<dbReference type="GeneID" id="117491622"/>
<dbReference type="OrthoDB" id="5405561at2759"/>
<dbReference type="UniPathway" id="UPA00554">
    <property type="reaction ID" value="UER00611"/>
</dbReference>
<dbReference type="GO" id="GO:0005737">
    <property type="term" value="C:cytoplasm"/>
    <property type="evidence" value="ECO:0007669"/>
    <property type="project" value="UniProtKB-SubCell"/>
</dbReference>
<dbReference type="GO" id="GO:0004459">
    <property type="term" value="F:L-lactate dehydrogenase activity"/>
    <property type="evidence" value="ECO:0007669"/>
    <property type="project" value="UniProtKB-EC"/>
</dbReference>
<dbReference type="GO" id="GO:0006089">
    <property type="term" value="P:lactate metabolic process"/>
    <property type="evidence" value="ECO:0007669"/>
    <property type="project" value="TreeGrafter"/>
</dbReference>
<dbReference type="CDD" id="cd05293">
    <property type="entry name" value="LDH_1"/>
    <property type="match status" value="1"/>
</dbReference>
<dbReference type="FunFam" id="3.40.50.720:FF:000029">
    <property type="entry name" value="L-lactate dehydrogenase A chain"/>
    <property type="match status" value="1"/>
</dbReference>
<dbReference type="FunFam" id="3.90.110.10:FF:000003">
    <property type="entry name" value="L-lactate dehydrogenase A chain"/>
    <property type="match status" value="1"/>
</dbReference>
<dbReference type="Gene3D" id="3.90.110.10">
    <property type="entry name" value="Lactate dehydrogenase/glycoside hydrolase, family 4, C-terminal"/>
    <property type="match status" value="1"/>
</dbReference>
<dbReference type="Gene3D" id="3.40.50.720">
    <property type="entry name" value="NAD(P)-binding Rossmann-like Domain"/>
    <property type="match status" value="1"/>
</dbReference>
<dbReference type="HAMAP" id="MF_00488">
    <property type="entry name" value="Lactate_dehydrog"/>
    <property type="match status" value="1"/>
</dbReference>
<dbReference type="InterPro" id="IPR001557">
    <property type="entry name" value="L-lactate/malate_DH"/>
</dbReference>
<dbReference type="InterPro" id="IPR011304">
    <property type="entry name" value="L-lactate_DH"/>
</dbReference>
<dbReference type="InterPro" id="IPR018177">
    <property type="entry name" value="L-lactate_DH_AS"/>
</dbReference>
<dbReference type="InterPro" id="IPR022383">
    <property type="entry name" value="Lactate/malate_DH_C"/>
</dbReference>
<dbReference type="InterPro" id="IPR001236">
    <property type="entry name" value="Lactate/malate_DH_N"/>
</dbReference>
<dbReference type="InterPro" id="IPR015955">
    <property type="entry name" value="Lactate_DH/Glyco_Ohase_4_C"/>
</dbReference>
<dbReference type="InterPro" id="IPR036291">
    <property type="entry name" value="NAD(P)-bd_dom_sf"/>
</dbReference>
<dbReference type="NCBIfam" id="TIGR01771">
    <property type="entry name" value="L-LDH-NAD"/>
    <property type="match status" value="1"/>
</dbReference>
<dbReference type="NCBIfam" id="NF000824">
    <property type="entry name" value="PRK00066.1"/>
    <property type="match status" value="1"/>
</dbReference>
<dbReference type="NCBIfam" id="NF004863">
    <property type="entry name" value="PRK06223.1"/>
    <property type="match status" value="1"/>
</dbReference>
<dbReference type="PANTHER" id="PTHR43128">
    <property type="entry name" value="L-2-HYDROXYCARBOXYLATE DEHYDROGENASE (NAD(P)(+))"/>
    <property type="match status" value="1"/>
</dbReference>
<dbReference type="PANTHER" id="PTHR43128:SF10">
    <property type="entry name" value="L-LACTATE DEHYDROGENASE A CHAIN"/>
    <property type="match status" value="1"/>
</dbReference>
<dbReference type="Pfam" id="PF02866">
    <property type="entry name" value="Ldh_1_C"/>
    <property type="match status" value="1"/>
</dbReference>
<dbReference type="Pfam" id="PF00056">
    <property type="entry name" value="Ldh_1_N"/>
    <property type="match status" value="1"/>
</dbReference>
<dbReference type="PIRSF" id="PIRSF000102">
    <property type="entry name" value="Lac_mal_DH"/>
    <property type="match status" value="1"/>
</dbReference>
<dbReference type="PRINTS" id="PR00086">
    <property type="entry name" value="LLDHDRGNASE"/>
</dbReference>
<dbReference type="SUPFAM" id="SSF56327">
    <property type="entry name" value="LDH C-terminal domain-like"/>
    <property type="match status" value="1"/>
</dbReference>
<dbReference type="SUPFAM" id="SSF51735">
    <property type="entry name" value="NAD(P)-binding Rossmann-fold domains"/>
    <property type="match status" value="1"/>
</dbReference>
<dbReference type="PROSITE" id="PS00064">
    <property type="entry name" value="L_LDH"/>
    <property type="match status" value="1"/>
</dbReference>
<accession>P69082</accession>
<accession>O93619</accession>
<name>LDHA_TREBE</name>
<evidence type="ECO:0000250" key="1"/>
<evidence type="ECO:0000250" key="2">
    <source>
        <dbReference type="UniProtKB" id="P00338"/>
    </source>
</evidence>
<evidence type="ECO:0000305" key="3"/>
<gene>
    <name type="primary">ldha</name>
</gene>
<sequence length="331" mass="36183">MSTKEKLISHVMKEEPVGSRNKVTVVGVGMVGMASAISILLKDLCDELAMVDVMEDKLKGEVMDLQHGSLFLKTKIVGDKDYSVTANSKVVVVTAGARQQEGESRLNLVQRNVNIFKFIIPNIVKYSPNCILMVVSNPVDILTYVAWKLSGFPRHRVIGSGTNLDSARFRHLIGEKLHLHPSSCHAWIVGEHGDSSVPVWSGVNVAGVSLQGLNPQMGTEGDGENWKAIHKEVVDGAYEVIKLKGYTSWAIGMSVADLVESIIKNMHKVHPVSTLVQGMHGVKDEVFLSVPCVLGNSGLTDVIHMTLKAEEEKQLQKSAETLWGVQKELTL</sequence>
<keyword id="KW-0963">Cytoplasm</keyword>
<keyword id="KW-0520">NAD</keyword>
<keyword id="KW-0560">Oxidoreductase</keyword>
<feature type="initiator methionine" description="Removed" evidence="1">
    <location>
        <position position="1"/>
    </location>
</feature>
<feature type="chain" id="PRO_0000168446" description="L-lactate dehydrogenase A chain">
    <location>
        <begin position="2"/>
        <end position="331"/>
    </location>
</feature>
<feature type="active site" description="Proton acceptor" evidence="1">
    <location>
        <position position="192"/>
    </location>
</feature>
<feature type="binding site" evidence="1">
    <location>
        <begin position="29"/>
        <end position="57"/>
    </location>
    <ligand>
        <name>NAD(+)</name>
        <dbReference type="ChEBI" id="CHEBI:57540"/>
    </ligand>
</feature>
<feature type="binding site" evidence="1">
    <location>
        <position position="98"/>
    </location>
    <ligand>
        <name>NAD(+)</name>
        <dbReference type="ChEBI" id="CHEBI:57540"/>
    </ligand>
</feature>
<feature type="binding site" evidence="1">
    <location>
        <position position="105"/>
    </location>
    <ligand>
        <name>substrate</name>
    </ligand>
</feature>
<feature type="binding site" evidence="1">
    <location>
        <position position="137"/>
    </location>
    <ligand>
        <name>NAD(+)</name>
        <dbReference type="ChEBI" id="CHEBI:57540"/>
    </ligand>
</feature>
<feature type="binding site" evidence="1">
    <location>
        <position position="137"/>
    </location>
    <ligand>
        <name>substrate</name>
    </ligand>
</feature>
<feature type="binding site" evidence="1">
    <location>
        <position position="168"/>
    </location>
    <ligand>
        <name>substrate</name>
    </ligand>
</feature>
<feature type="binding site" evidence="1">
    <location>
        <position position="247"/>
    </location>
    <ligand>
        <name>substrate</name>
    </ligand>
</feature>
<reference key="1">
    <citation type="submission" date="1999-07" db="EMBL/GenBank/DDBJ databases">
        <title>Cold adaptation in lactate dehydrogenases from Antarctic fish.</title>
        <authorList>
            <person name="Marshall C.J."/>
            <person name="Sharpe M.L."/>
            <person name="Love C.A."/>
        </authorList>
    </citation>
    <scope>NUCLEOTIDE SEQUENCE [MRNA]</scope>
    <source>
        <tissue>Muscle</tissue>
    </source>
</reference>